<reference key="1">
    <citation type="submission" date="2006-08" db="EMBL/GenBank/DDBJ databases">
        <title>Complete sequence of Shewanella frigidimarina NCIMB 400.</title>
        <authorList>
            <consortium name="US DOE Joint Genome Institute"/>
            <person name="Copeland A."/>
            <person name="Lucas S."/>
            <person name="Lapidus A."/>
            <person name="Barry K."/>
            <person name="Detter J.C."/>
            <person name="Glavina del Rio T."/>
            <person name="Hammon N."/>
            <person name="Israni S."/>
            <person name="Dalin E."/>
            <person name="Tice H."/>
            <person name="Pitluck S."/>
            <person name="Fredrickson J.K."/>
            <person name="Kolker E."/>
            <person name="McCuel L.A."/>
            <person name="DiChristina T."/>
            <person name="Nealson K.H."/>
            <person name="Newman D."/>
            <person name="Tiedje J.M."/>
            <person name="Zhou J."/>
            <person name="Romine M.F."/>
            <person name="Culley D.E."/>
            <person name="Serres M."/>
            <person name="Chertkov O."/>
            <person name="Brettin T."/>
            <person name="Bruce D."/>
            <person name="Han C."/>
            <person name="Tapia R."/>
            <person name="Gilna P."/>
            <person name="Schmutz J."/>
            <person name="Larimer F."/>
            <person name="Land M."/>
            <person name="Hauser L."/>
            <person name="Kyrpides N."/>
            <person name="Mikhailova N."/>
            <person name="Richardson P."/>
        </authorList>
    </citation>
    <scope>NUCLEOTIDE SEQUENCE [LARGE SCALE GENOMIC DNA]</scope>
    <source>
        <strain>NCIMB 400</strain>
    </source>
</reference>
<dbReference type="EC" id="6.2.1.1" evidence="1"/>
<dbReference type="EMBL" id="CP000447">
    <property type="protein sequence ID" value="ABI71321.1"/>
    <property type="molecule type" value="Genomic_DNA"/>
</dbReference>
<dbReference type="SMR" id="Q084J4"/>
<dbReference type="STRING" id="318167.Sfri_1469"/>
<dbReference type="KEGG" id="sfr:Sfri_1469"/>
<dbReference type="eggNOG" id="COG0365">
    <property type="taxonomic scope" value="Bacteria"/>
</dbReference>
<dbReference type="HOGENOM" id="CLU_000022_3_6_6"/>
<dbReference type="OrthoDB" id="9803968at2"/>
<dbReference type="Proteomes" id="UP000000684">
    <property type="component" value="Chromosome"/>
</dbReference>
<dbReference type="GO" id="GO:0005829">
    <property type="term" value="C:cytosol"/>
    <property type="evidence" value="ECO:0007669"/>
    <property type="project" value="TreeGrafter"/>
</dbReference>
<dbReference type="GO" id="GO:0003987">
    <property type="term" value="F:acetate-CoA ligase activity"/>
    <property type="evidence" value="ECO:0007669"/>
    <property type="project" value="UniProtKB-UniRule"/>
</dbReference>
<dbReference type="GO" id="GO:0016208">
    <property type="term" value="F:AMP binding"/>
    <property type="evidence" value="ECO:0007669"/>
    <property type="project" value="InterPro"/>
</dbReference>
<dbReference type="GO" id="GO:0005524">
    <property type="term" value="F:ATP binding"/>
    <property type="evidence" value="ECO:0007669"/>
    <property type="project" value="UniProtKB-KW"/>
</dbReference>
<dbReference type="GO" id="GO:0046872">
    <property type="term" value="F:metal ion binding"/>
    <property type="evidence" value="ECO:0007669"/>
    <property type="project" value="UniProtKB-KW"/>
</dbReference>
<dbReference type="GO" id="GO:0019427">
    <property type="term" value="P:acetyl-CoA biosynthetic process from acetate"/>
    <property type="evidence" value="ECO:0007669"/>
    <property type="project" value="InterPro"/>
</dbReference>
<dbReference type="CDD" id="cd05966">
    <property type="entry name" value="ACS"/>
    <property type="match status" value="1"/>
</dbReference>
<dbReference type="FunFam" id="3.30.300.30:FF:000004">
    <property type="entry name" value="Acetyl-coenzyme A synthetase"/>
    <property type="match status" value="1"/>
</dbReference>
<dbReference type="FunFam" id="3.40.50.12780:FF:000001">
    <property type="entry name" value="Acetyl-coenzyme A synthetase"/>
    <property type="match status" value="1"/>
</dbReference>
<dbReference type="Gene3D" id="3.30.300.30">
    <property type="match status" value="1"/>
</dbReference>
<dbReference type="Gene3D" id="3.40.50.12780">
    <property type="entry name" value="N-terminal domain of ligase-like"/>
    <property type="match status" value="1"/>
</dbReference>
<dbReference type="HAMAP" id="MF_01123">
    <property type="entry name" value="Ac_CoA_synth"/>
    <property type="match status" value="1"/>
</dbReference>
<dbReference type="InterPro" id="IPR011904">
    <property type="entry name" value="Ac_CoA_lig"/>
</dbReference>
<dbReference type="InterPro" id="IPR032387">
    <property type="entry name" value="ACAS_N"/>
</dbReference>
<dbReference type="InterPro" id="IPR025110">
    <property type="entry name" value="AMP-bd_C"/>
</dbReference>
<dbReference type="InterPro" id="IPR045851">
    <property type="entry name" value="AMP-bd_C_sf"/>
</dbReference>
<dbReference type="InterPro" id="IPR020845">
    <property type="entry name" value="AMP-binding_CS"/>
</dbReference>
<dbReference type="InterPro" id="IPR000873">
    <property type="entry name" value="AMP-dep_synth/lig_dom"/>
</dbReference>
<dbReference type="InterPro" id="IPR042099">
    <property type="entry name" value="ANL_N_sf"/>
</dbReference>
<dbReference type="NCBIfam" id="TIGR02188">
    <property type="entry name" value="Ac_CoA_lig_AcsA"/>
    <property type="match status" value="1"/>
</dbReference>
<dbReference type="NCBIfam" id="NF001208">
    <property type="entry name" value="PRK00174.1"/>
    <property type="match status" value="1"/>
</dbReference>
<dbReference type="PANTHER" id="PTHR24095">
    <property type="entry name" value="ACETYL-COENZYME A SYNTHETASE"/>
    <property type="match status" value="1"/>
</dbReference>
<dbReference type="PANTHER" id="PTHR24095:SF243">
    <property type="entry name" value="ACETYL-COENZYME A SYNTHETASE"/>
    <property type="match status" value="1"/>
</dbReference>
<dbReference type="Pfam" id="PF16177">
    <property type="entry name" value="ACAS_N"/>
    <property type="match status" value="1"/>
</dbReference>
<dbReference type="Pfam" id="PF00501">
    <property type="entry name" value="AMP-binding"/>
    <property type="match status" value="1"/>
</dbReference>
<dbReference type="Pfam" id="PF13193">
    <property type="entry name" value="AMP-binding_C"/>
    <property type="match status" value="1"/>
</dbReference>
<dbReference type="SUPFAM" id="SSF56801">
    <property type="entry name" value="Acetyl-CoA synthetase-like"/>
    <property type="match status" value="1"/>
</dbReference>
<dbReference type="PROSITE" id="PS00455">
    <property type="entry name" value="AMP_BINDING"/>
    <property type="match status" value="1"/>
</dbReference>
<protein>
    <recommendedName>
        <fullName evidence="1">Acetyl-coenzyme A synthetase</fullName>
        <shortName evidence="1">AcCoA synthetase</shortName>
        <shortName evidence="1">Acs</shortName>
        <ecNumber evidence="1">6.2.1.1</ecNumber>
    </recommendedName>
    <alternativeName>
        <fullName evidence="1">Acetate--CoA ligase</fullName>
    </alternativeName>
    <alternativeName>
        <fullName evidence="1">Acyl-activating enzyme</fullName>
    </alternativeName>
</protein>
<accession>Q084J4</accession>
<evidence type="ECO:0000255" key="1">
    <source>
        <dbReference type="HAMAP-Rule" id="MF_01123"/>
    </source>
</evidence>
<sequence length="650" mass="72436">MTPQSLYKVPSDIAENALVNNDQYKKMYQESIINPEGFWREHGKRIDWIKPYTKIKKTSFDDHNLSINWFYDGTLNASANCLDRHLEEHGDKLAIIWEGDDANEQRKLTYAELHTQVCKFANALRSQGVNKGDIVTIYMPMVPEAAVAMLACARIGAVHSVVFGGFSPDSIAARVIDGKSKVLITADEGIRGGRKIPLKRSIDEAISNPDVTCVEKVIVFKRTGGDIDWVEGRDVWWHSLMEVASEFCQPAEMNAEDPLFLLYTSGSTGNPKGVLHTTGGYMVYASMTHEYVFDYKADEVYWCTADVGWITGHSYMVYGPFANAATVLIHEGVPNHPTPARLGEMIDRHKVNILYTAPTLIRALMAEGKEQFSSYKGDSLRIMGSVGEPINPEAWRWYHEVIGHENCPIVDTWWQTETGGILISPLPGATDTKPGSATRPFFGVQPALVDNMGDIVEGTGEGNLVILDSWPGQMRTVYGDHDRFALTYFKTFRGMYFTGDGARRDEDGYYWITGRVDDVINVSGHRLGTAEVESALVSHELVAEAAVVGYPHDIKGQGIYAYVTLTRGIEPTEELRQELRQWVRKEIGALATPDLIQWASGLPKTRSGKIMRRFLRKIAANEVTNLGDSSTLADPAVIDTLIESRLNKTE</sequence>
<proteinExistence type="inferred from homology"/>
<gene>
    <name evidence="1" type="primary">acsA</name>
    <name type="ordered locus">Sfri_1469</name>
</gene>
<feature type="chain" id="PRO_1000065319" description="Acetyl-coenzyme A synthetase">
    <location>
        <begin position="1"/>
        <end position="650"/>
    </location>
</feature>
<feature type="binding site" evidence="1">
    <location>
        <begin position="191"/>
        <end position="194"/>
    </location>
    <ligand>
        <name>CoA</name>
        <dbReference type="ChEBI" id="CHEBI:57287"/>
    </ligand>
</feature>
<feature type="binding site" evidence="1">
    <location>
        <position position="311"/>
    </location>
    <ligand>
        <name>CoA</name>
        <dbReference type="ChEBI" id="CHEBI:57287"/>
    </ligand>
</feature>
<feature type="binding site" evidence="1">
    <location>
        <position position="335"/>
    </location>
    <ligand>
        <name>CoA</name>
        <dbReference type="ChEBI" id="CHEBI:57287"/>
    </ligand>
</feature>
<feature type="binding site" evidence="1">
    <location>
        <begin position="387"/>
        <end position="389"/>
    </location>
    <ligand>
        <name>ATP</name>
        <dbReference type="ChEBI" id="CHEBI:30616"/>
    </ligand>
</feature>
<feature type="binding site" evidence="1">
    <location>
        <begin position="411"/>
        <end position="416"/>
    </location>
    <ligand>
        <name>ATP</name>
        <dbReference type="ChEBI" id="CHEBI:30616"/>
    </ligand>
</feature>
<feature type="binding site" evidence="1">
    <location>
        <position position="500"/>
    </location>
    <ligand>
        <name>ATP</name>
        <dbReference type="ChEBI" id="CHEBI:30616"/>
    </ligand>
</feature>
<feature type="binding site" evidence="1">
    <location>
        <position position="515"/>
    </location>
    <ligand>
        <name>ATP</name>
        <dbReference type="ChEBI" id="CHEBI:30616"/>
    </ligand>
</feature>
<feature type="binding site" evidence="1">
    <location>
        <position position="523"/>
    </location>
    <ligand>
        <name>CoA</name>
        <dbReference type="ChEBI" id="CHEBI:57287"/>
    </ligand>
</feature>
<feature type="binding site" evidence="1">
    <location>
        <position position="526"/>
    </location>
    <ligand>
        <name>ATP</name>
        <dbReference type="ChEBI" id="CHEBI:30616"/>
    </ligand>
</feature>
<feature type="binding site" evidence="1">
    <location>
        <position position="537"/>
    </location>
    <ligand>
        <name>Mg(2+)</name>
        <dbReference type="ChEBI" id="CHEBI:18420"/>
    </ligand>
</feature>
<feature type="binding site" evidence="1">
    <location>
        <position position="539"/>
    </location>
    <ligand>
        <name>Mg(2+)</name>
        <dbReference type="ChEBI" id="CHEBI:18420"/>
    </ligand>
</feature>
<feature type="binding site" evidence="1">
    <location>
        <position position="542"/>
    </location>
    <ligand>
        <name>Mg(2+)</name>
        <dbReference type="ChEBI" id="CHEBI:18420"/>
    </ligand>
</feature>
<feature type="binding site" evidence="1">
    <location>
        <position position="584"/>
    </location>
    <ligand>
        <name>CoA</name>
        <dbReference type="ChEBI" id="CHEBI:57287"/>
    </ligand>
</feature>
<feature type="modified residue" description="N6-acetyllysine" evidence="1">
    <location>
        <position position="609"/>
    </location>
</feature>
<keyword id="KW-0007">Acetylation</keyword>
<keyword id="KW-0067">ATP-binding</keyword>
<keyword id="KW-0436">Ligase</keyword>
<keyword id="KW-0460">Magnesium</keyword>
<keyword id="KW-0479">Metal-binding</keyword>
<keyword id="KW-0547">Nucleotide-binding</keyword>
<keyword id="KW-1185">Reference proteome</keyword>
<comment type="function">
    <text evidence="1">Catalyzes the conversion of acetate into acetyl-CoA (AcCoA), an essential intermediate at the junction of anabolic and catabolic pathways. AcsA undergoes a two-step reaction. In the first half reaction, AcsA combines acetate with ATP to form acetyl-adenylate (AcAMP) intermediate. In the second half reaction, it can then transfer the acetyl group from AcAMP to the sulfhydryl group of CoA, forming the product AcCoA.</text>
</comment>
<comment type="catalytic activity">
    <reaction evidence="1">
        <text>acetate + ATP + CoA = acetyl-CoA + AMP + diphosphate</text>
        <dbReference type="Rhea" id="RHEA:23176"/>
        <dbReference type="ChEBI" id="CHEBI:30089"/>
        <dbReference type="ChEBI" id="CHEBI:30616"/>
        <dbReference type="ChEBI" id="CHEBI:33019"/>
        <dbReference type="ChEBI" id="CHEBI:57287"/>
        <dbReference type="ChEBI" id="CHEBI:57288"/>
        <dbReference type="ChEBI" id="CHEBI:456215"/>
        <dbReference type="EC" id="6.2.1.1"/>
    </reaction>
</comment>
<comment type="cofactor">
    <cofactor evidence="1">
        <name>Mg(2+)</name>
        <dbReference type="ChEBI" id="CHEBI:18420"/>
    </cofactor>
</comment>
<comment type="PTM">
    <text evidence="1">Acetylated. Deacetylation by the SIR2-homolog deacetylase activates the enzyme.</text>
</comment>
<comment type="similarity">
    <text evidence="1">Belongs to the ATP-dependent AMP-binding enzyme family.</text>
</comment>
<organism>
    <name type="scientific">Shewanella frigidimarina (strain NCIMB 400)</name>
    <dbReference type="NCBI Taxonomy" id="318167"/>
    <lineage>
        <taxon>Bacteria</taxon>
        <taxon>Pseudomonadati</taxon>
        <taxon>Pseudomonadota</taxon>
        <taxon>Gammaproteobacteria</taxon>
        <taxon>Alteromonadales</taxon>
        <taxon>Shewanellaceae</taxon>
        <taxon>Shewanella</taxon>
    </lineage>
</organism>
<name>ACSA_SHEFN</name>